<comment type="function">
    <text evidence="1">Putative deoxyribonuclease.</text>
</comment>
<comment type="cofactor">
    <cofactor evidence="1">
        <name>a divalent metal cation</name>
        <dbReference type="ChEBI" id="CHEBI:60240"/>
    </cofactor>
    <text evidence="1">Binds 2 divalent metal cations per subunit.</text>
</comment>
<comment type="subcellular location">
    <subcellularLocation>
        <location evidence="2">Nucleus</location>
    </subcellularLocation>
</comment>
<comment type="similarity">
    <text evidence="2">Belongs to the metallo-dependent hydrolases superfamily. TatD-type hydrolase family.</text>
</comment>
<feature type="chain" id="PRO_0000388426" description="Putative deoxyribonuclease TATDN1 homolog">
    <location>
        <begin position="1"/>
        <end position="274"/>
    </location>
</feature>
<feature type="binding site" evidence="1">
    <location>
        <position position="105"/>
    </location>
    <ligand>
        <name>a divalent metal cation</name>
        <dbReference type="ChEBI" id="CHEBI:60240"/>
        <label>1</label>
    </ligand>
</feature>
<feature type="binding site" evidence="1">
    <location>
        <position position="105"/>
    </location>
    <ligand>
        <name>a divalent metal cation</name>
        <dbReference type="ChEBI" id="CHEBI:60240"/>
        <label>2</label>
    </ligand>
</feature>
<feature type="binding site" evidence="1">
    <location>
        <position position="139"/>
    </location>
    <ligand>
        <name>a divalent metal cation</name>
        <dbReference type="ChEBI" id="CHEBI:60240"/>
        <label>2</label>
    </ligand>
</feature>
<feature type="binding site" evidence="1">
    <location>
        <position position="162"/>
    </location>
    <ligand>
        <name>a divalent metal cation</name>
        <dbReference type="ChEBI" id="CHEBI:60240"/>
        <label>2</label>
    </ligand>
</feature>
<feature type="binding site" evidence="1">
    <location>
        <position position="208"/>
    </location>
    <ligand>
        <name>a divalent metal cation</name>
        <dbReference type="ChEBI" id="CHEBI:60240"/>
        <label>1</label>
    </ligand>
</feature>
<evidence type="ECO:0000250" key="1"/>
<evidence type="ECO:0000305" key="2"/>
<name>TATD1_ENTBH</name>
<reference key="1">
    <citation type="journal article" date="2007" name="PLoS ONE">
        <title>Patterns of genome evolution among the microsporidian parasites Encephalitozoon cuniculi, Antonospora locustae and Enterocytozoon bieneusi.</title>
        <authorList>
            <person name="Corradi N."/>
            <person name="Akiyoshi D.E."/>
            <person name="Morrison H.G."/>
            <person name="Feng X."/>
            <person name="Weiss L.M."/>
            <person name="Tzipori S."/>
            <person name="Keeling P.J."/>
        </authorList>
    </citation>
    <scope>NUCLEOTIDE SEQUENCE [LARGE SCALE GENOMIC DNA]</scope>
    <source>
        <strain>H348</strain>
    </source>
</reference>
<reference key="2">
    <citation type="journal article" date="2009" name="PLoS Pathog.">
        <title>Genomic survey of the non-cultivatable opportunistic human pathogen, Enterocytozoon bieneusi.</title>
        <authorList>
            <person name="Akiyoshi D.E."/>
            <person name="Morrison H.G."/>
            <person name="Lei S."/>
            <person name="Feng X."/>
            <person name="Zhang Q."/>
            <person name="Corradi N."/>
            <person name="Mayanja H."/>
            <person name="Tumwine J.K."/>
            <person name="Keeling P.J."/>
            <person name="Weiss L.M."/>
            <person name="Tzipori S."/>
        </authorList>
    </citation>
    <scope>NUCLEOTIDE SEQUENCE [LARGE SCALE GENOMIC DNA]</scope>
    <source>
        <strain>H348</strain>
    </source>
</reference>
<proteinExistence type="inferred from homology"/>
<organism>
    <name type="scientific">Enterocytozoon bieneusi (strain H348)</name>
    <name type="common">Microsporidian parasite</name>
    <dbReference type="NCBI Taxonomy" id="481877"/>
    <lineage>
        <taxon>Eukaryota</taxon>
        <taxon>Fungi</taxon>
        <taxon>Fungi incertae sedis</taxon>
        <taxon>Microsporidia</taxon>
        <taxon>Enterocytozoonidae</taxon>
        <taxon>Enterocytozoon</taxon>
    </lineage>
</organism>
<dbReference type="EC" id="3.1.21.-"/>
<dbReference type="EMBL" id="ABGB01000029">
    <property type="protein sequence ID" value="EED43915.1"/>
    <property type="molecule type" value="Genomic_DNA"/>
</dbReference>
<dbReference type="RefSeq" id="XP_002650160.1">
    <property type="nucleotide sequence ID" value="XM_002650114.1"/>
</dbReference>
<dbReference type="SMR" id="B7XJI2"/>
<dbReference type="FunCoup" id="B7XJI2">
    <property type="interactions" value="70"/>
</dbReference>
<dbReference type="STRING" id="481877.B7XJI2"/>
<dbReference type="VEuPathDB" id="MicrosporidiaDB:EBI_25826"/>
<dbReference type="HOGENOM" id="CLU_031506_1_1_1"/>
<dbReference type="InParanoid" id="B7XJI2"/>
<dbReference type="OMA" id="YGGSQKH"/>
<dbReference type="OrthoDB" id="6079689at2759"/>
<dbReference type="GO" id="GO:0005829">
    <property type="term" value="C:cytosol"/>
    <property type="evidence" value="ECO:0007669"/>
    <property type="project" value="TreeGrafter"/>
</dbReference>
<dbReference type="GO" id="GO:0005634">
    <property type="term" value="C:nucleus"/>
    <property type="evidence" value="ECO:0007669"/>
    <property type="project" value="UniProtKB-SubCell"/>
</dbReference>
<dbReference type="GO" id="GO:0008296">
    <property type="term" value="F:3'-5'-DNA exonuclease activity"/>
    <property type="evidence" value="ECO:0007669"/>
    <property type="project" value="TreeGrafter"/>
</dbReference>
<dbReference type="GO" id="GO:0046872">
    <property type="term" value="F:metal ion binding"/>
    <property type="evidence" value="ECO:0007669"/>
    <property type="project" value="UniProtKB-KW"/>
</dbReference>
<dbReference type="CDD" id="cd01310">
    <property type="entry name" value="TatD_DNAse"/>
    <property type="match status" value="1"/>
</dbReference>
<dbReference type="Gene3D" id="3.20.20.140">
    <property type="entry name" value="Metal-dependent hydrolases"/>
    <property type="match status" value="1"/>
</dbReference>
<dbReference type="InterPro" id="IPR018228">
    <property type="entry name" value="DNase_TatD-rel_CS"/>
</dbReference>
<dbReference type="InterPro" id="IPR032466">
    <property type="entry name" value="Metal_Hydrolase"/>
</dbReference>
<dbReference type="InterPro" id="IPR001130">
    <property type="entry name" value="TatD-like"/>
</dbReference>
<dbReference type="InterPro" id="IPR050891">
    <property type="entry name" value="TatD-type_Hydrolase"/>
</dbReference>
<dbReference type="PANTHER" id="PTHR10060:SF15">
    <property type="entry name" value="DEOXYRIBONUCLEASE TATDN1"/>
    <property type="match status" value="1"/>
</dbReference>
<dbReference type="PANTHER" id="PTHR10060">
    <property type="entry name" value="TATD FAMILY DEOXYRIBONUCLEASE"/>
    <property type="match status" value="1"/>
</dbReference>
<dbReference type="Pfam" id="PF01026">
    <property type="entry name" value="TatD_DNase"/>
    <property type="match status" value="1"/>
</dbReference>
<dbReference type="PIRSF" id="PIRSF005902">
    <property type="entry name" value="DNase_TatD"/>
    <property type="match status" value="1"/>
</dbReference>
<dbReference type="SUPFAM" id="SSF51556">
    <property type="entry name" value="Metallo-dependent hydrolases"/>
    <property type="match status" value="1"/>
</dbReference>
<dbReference type="PROSITE" id="PS01091">
    <property type="entry name" value="TATD_3"/>
    <property type="match status" value="1"/>
</dbReference>
<accession>B7XJI2</accession>
<gene>
    <name type="ORF">EBI_25826</name>
</gene>
<sequence length="274" mass="31862">MSISYNVFDIAVNPTYYSFEKLKLIVEKAKELKILPLFIGLDMETNIQVIHLSKMQQTLCYCGIHPTHINTLYKENNIWNILDIVQADLKQLFVENSEYIIAIGECGLDYYRNQLKIEQQRIFKMQLELSYLNIPYFLHMRNAFDDFYNIIKNYTNVTGVIHSFDGTVDQALALINLGFYIGINGCSLKNNIDLVKNIPIDKILVETDSPFCLIRKSYAGAEYGKVLKVKENEPVYILNLIEIISNIKQMPIQQLIHQFKLNTIKCFPQLKKFQ</sequence>
<protein>
    <recommendedName>
        <fullName>Putative deoxyribonuclease TATDN1 homolog</fullName>
        <ecNumber>3.1.21.-</ecNumber>
    </recommendedName>
</protein>
<keyword id="KW-0378">Hydrolase</keyword>
<keyword id="KW-0479">Metal-binding</keyword>
<keyword id="KW-0540">Nuclease</keyword>
<keyword id="KW-0539">Nucleus</keyword>